<sequence>MSYTLDSLGNPSAYRRVPTETRSSFSRVSGSPSSGFRSQSWSRGSPSTVSSSYKRSALAPRLAYSSAMLSSAESSLDFSQSSSLLNGGSGGDYKLSRSNEKEQLQGLNDRFAGYIEKVHYLEQQNKEIEAEIHALRQKQASHAQLGDAYDQEIRELRATLEMVNHEKAQVQLDSDHLEEDIHRLKERFEEEARLRDDTEAAIRAVRKDIEESSMVKVELDKKVQSLQDEVAFLRSNHEEEVADLLAQIQASHITVERKDYLKTDISTALKEIRSQLECHSDQNMHQAEEWFKCRYAKLTEAAEQNKEAIRSAKEEIAEYRRQLQSKSIELESVRGTKESLERQLSDIEERHNHDLSSYQDTIQQLENELRGTKWEMARHLREYQDLLNVKMALDIEIAAYRKLLEGEETRFSTFSGSITGPLYTHRQPSVTISSKIQKTKVEAPKLKVQHKFVEEIIEETKVEDEKSEMEDALTVIAEELAASAKEEKEEAEEKEEEPEVEKSPVKSPEAKEEEEGEKEEEEEGQEEEEEEDEGVKSDQAEEGGSEKEGSSEKDEGEQEEEGETEAEGEGEEAEAKEEKKTEGKVEEMAIKEEIKVEKPEKAKSPVPKSPVEEVKPKPEAKAGKDEQKEEEKVEEKKEVAKESPKEEKVEKKEEKPKDVPDKKKAESPVKEKAVEEMITITKSVKVSLEKDTKEEKPQQQEKVKEKAEEEGGSEEEVGDKSPQESKKEDIAINGEVEGKEEEEQETQEKGSGQEEEKGVVTNGLDVSPAEEKKGEDRSDDKVVVTKKVEKITSEGGDGATKYITKSVTVTQKVEEHEETFEEKLVSTKKVEKVTSHAIVKEVTQGD</sequence>
<comment type="function">
    <text evidence="3">Neurofilaments usually contain three intermediate filament proteins: NEFL, NEFM, and NEFH which are involved in the maintenance of neuronal caliber. May additionally cooperate with the neuronal intermediate filament proteins PRPH and INA to form neuronal filamentous networks (By similarity).</text>
</comment>
<comment type="subunit">
    <text evidence="8">Forms heterodimers with NEFL; which can further hetero-oligomerize (in vitro) (PubMed:9388258). Forms heterodimers with INA (in vitro) (PubMed:9388258).</text>
</comment>
<comment type="subcellular location">
    <subcellularLocation>
        <location evidence="3">Cytoplasm</location>
        <location evidence="3">Cytoskeleton</location>
    </subcellularLocation>
    <subcellularLocation>
        <location evidence="3">Cell projection</location>
        <location evidence="3">Axon</location>
    </subcellularLocation>
</comment>
<comment type="tissue specificity">
    <text evidence="8">Expressed in the dorsal root ganglion neurons (at protein level).</text>
</comment>
<comment type="PTM">
    <text evidence="6">There are a number of repeats of the tripeptide K-S-P, NFM is phosphorylated on a number of the serines in this motif. It is thought that phosphorylation of NFM results in the formation of interfilament cross bridges that are important in the maintenance of axonal caliber.</text>
</comment>
<comment type="PTM">
    <text evidence="6">Phosphorylation seems to play a major role in the functioning of the larger neurofilament polypeptides (NF-M and NF-H), the levels of phosphorylation being altered developmentally and coincidentally with a change in the neurofilament function.</text>
</comment>
<comment type="PTM">
    <text evidence="1">Phosphorylated in the head and rod regions by the PKC kinase PKN1, leading to the inhibition of polymerization.</text>
</comment>
<comment type="similarity">
    <text evidence="4">Belongs to the intermediate filament family.</text>
</comment>
<feature type="initiator methionine" description="Removed" evidence="9">
    <location>
        <position position="1"/>
    </location>
</feature>
<feature type="chain" id="PRO_0000063798" description="Neurofilament medium polypeptide">
    <location>
        <begin position="2"/>
        <end position="846"/>
    </location>
</feature>
<feature type="domain" description="IF rod" evidence="4">
    <location>
        <begin position="100"/>
        <end position="411"/>
    </location>
</feature>
<feature type="region of interest" description="Disordered" evidence="5">
    <location>
        <begin position="1"/>
        <end position="52"/>
    </location>
</feature>
<feature type="region of interest" description="Head">
    <location>
        <begin position="2"/>
        <end position="104"/>
    </location>
</feature>
<feature type="region of interest" description="Coil 1A">
    <location>
        <begin position="104"/>
        <end position="135"/>
    </location>
</feature>
<feature type="region of interest" description="Linker 1">
    <location>
        <begin position="136"/>
        <end position="148"/>
    </location>
</feature>
<feature type="region of interest" description="Coil 1B">
    <location>
        <begin position="149"/>
        <end position="247"/>
    </location>
</feature>
<feature type="region of interest" description="Linker 12">
    <location>
        <begin position="248"/>
        <end position="264"/>
    </location>
</feature>
<feature type="region of interest" description="Coil 2A">
    <location>
        <begin position="265"/>
        <end position="286"/>
    </location>
</feature>
<feature type="region of interest" description="Linker 2">
    <location>
        <begin position="287"/>
        <end position="290"/>
    </location>
</feature>
<feature type="region of interest" description="Coil 2B">
    <location>
        <begin position="291"/>
        <end position="411"/>
    </location>
</feature>
<feature type="region of interest" description="Tail">
    <location>
        <begin position="412"/>
        <end position="845"/>
    </location>
</feature>
<feature type="region of interest" description="Disordered" evidence="5">
    <location>
        <begin position="483"/>
        <end position="783"/>
    </location>
</feature>
<feature type="compositionally biased region" description="Polar residues" evidence="5">
    <location>
        <begin position="1"/>
        <end position="10"/>
    </location>
</feature>
<feature type="compositionally biased region" description="Low complexity" evidence="5">
    <location>
        <begin position="22"/>
        <end position="45"/>
    </location>
</feature>
<feature type="compositionally biased region" description="Acidic residues" evidence="5">
    <location>
        <begin position="489"/>
        <end position="499"/>
    </location>
</feature>
<feature type="compositionally biased region" description="Basic and acidic residues" evidence="5">
    <location>
        <begin position="500"/>
        <end position="510"/>
    </location>
</feature>
<feature type="compositionally biased region" description="Acidic residues" evidence="5">
    <location>
        <begin position="511"/>
        <end position="533"/>
    </location>
</feature>
<feature type="compositionally biased region" description="Basic and acidic residues" evidence="5">
    <location>
        <begin position="534"/>
        <end position="553"/>
    </location>
</feature>
<feature type="compositionally biased region" description="Acidic residues" evidence="5">
    <location>
        <begin position="554"/>
        <end position="575"/>
    </location>
</feature>
<feature type="compositionally biased region" description="Basic and acidic residues" evidence="5">
    <location>
        <begin position="576"/>
        <end position="603"/>
    </location>
</feature>
<feature type="compositionally biased region" description="Basic and acidic residues" evidence="5">
    <location>
        <begin position="610"/>
        <end position="675"/>
    </location>
</feature>
<feature type="compositionally biased region" description="Basic and acidic residues" evidence="5">
    <location>
        <begin position="687"/>
        <end position="709"/>
    </location>
</feature>
<feature type="compositionally biased region" description="Basic and acidic residues" evidence="5">
    <location>
        <begin position="718"/>
        <end position="730"/>
    </location>
</feature>
<feature type="compositionally biased region" description="Basic and acidic residues" evidence="5">
    <location>
        <begin position="746"/>
        <end position="758"/>
    </location>
</feature>
<feature type="compositionally biased region" description="Basic and acidic residues" evidence="5">
    <location>
        <begin position="769"/>
        <end position="783"/>
    </location>
</feature>
<feature type="modified residue" description="N-acetylserine" evidence="9">
    <location>
        <position position="2"/>
    </location>
</feature>
<feature type="modified residue" description="Phosphoserine" evidence="11">
    <location>
        <position position="31"/>
    </location>
</feature>
<feature type="modified residue" description="Omega-N-methylarginine" evidence="3">
    <location>
        <position position="43"/>
    </location>
</feature>
<feature type="modified residue" description="Phosphoserine" evidence="3">
    <location>
        <position position="98"/>
    </location>
</feature>
<feature type="modified residue" description="Phosphoserine" evidence="3">
    <location>
        <position position="225"/>
    </location>
</feature>
<feature type="modified residue" description="Phosphotyrosine" evidence="3">
    <location>
        <position position="319"/>
    </location>
</feature>
<feature type="modified residue" description="Phosphoserine" evidence="11">
    <location>
        <position position="345"/>
    </location>
</feature>
<feature type="modified residue" description="Phosphoserine" evidence="11">
    <location>
        <position position="417"/>
    </location>
</feature>
<feature type="modified residue" description="Phosphoserine" evidence="11">
    <location>
        <position position="429"/>
    </location>
</feature>
<feature type="modified residue" description="Phosphoserine" evidence="11">
    <location>
        <position position="467"/>
    </location>
</feature>
<feature type="modified residue" description="Phosphoserine" evidence="11">
    <location>
        <position position="483"/>
    </location>
</feature>
<feature type="modified residue" description="Phosphoserine" evidence="6 11">
    <location>
        <position position="503"/>
    </location>
</feature>
<feature type="modified residue" description="Phosphoserine" evidence="6 11">
    <location>
        <position position="507"/>
    </location>
</feature>
<feature type="modified residue" description="Phosphoserine" evidence="6 11">
    <location>
        <position position="537"/>
    </location>
</feature>
<feature type="modified residue" description="Phosphoserine" evidence="11">
    <location>
        <position position="545"/>
    </location>
</feature>
<feature type="modified residue" description="Phosphoserine" evidence="11">
    <location>
        <position position="550"/>
    </location>
</feature>
<feature type="modified residue" description="Phosphoserine" evidence="11">
    <location>
        <position position="551"/>
    </location>
</feature>
<feature type="modified residue" description="Phosphothreonine" evidence="11">
    <location>
        <position position="564"/>
    </location>
</feature>
<feature type="modified residue" description="Phosphoserine" evidence="6 11">
    <location>
        <position position="604"/>
    </location>
</feature>
<feature type="modified residue" description="Phosphoserine" evidence="6 11">
    <location>
        <position position="609"/>
    </location>
</feature>
<feature type="modified residue" description="Phosphoserine" evidence="11">
    <location>
        <position position="643"/>
    </location>
</feature>
<feature type="modified residue" description="Phosphoserine" evidence="6 11">
    <location>
        <position position="667"/>
    </location>
</feature>
<feature type="modified residue" description="Phosphoserine" evidence="2">
    <location>
        <position position="687"/>
    </location>
</feature>
<feature type="modified residue" description="Phosphoserine" evidence="11">
    <location>
        <position position="713"/>
    </location>
</feature>
<feature type="modified residue" description="Phosphoserine" evidence="11">
    <location>
        <position position="721"/>
    </location>
</feature>
<feature type="modified residue" description="Phosphoserine" evidence="11">
    <location>
        <position position="751"/>
    </location>
</feature>
<feature type="modified residue" description="Phosphoserine" evidence="11">
    <location>
        <position position="767"/>
    </location>
</feature>
<feature type="glycosylation site" id="CAR_000130" description="O-linked (GlcNAc) threonine" evidence="7">
    <location>
        <position position="48"/>
    </location>
</feature>
<feature type="glycosylation site" id="CAR_000131" description="O-linked (GlcNAc) threonine" evidence="7">
    <location>
        <position position="431"/>
    </location>
</feature>
<feature type="sequence conflict" description="In Ref. 2; CAA78136." evidence="10" ref="2">
    <location>
        <position position="18"/>
    </location>
</feature>
<feature type="sequence conflict" description="In Ref. 2; CAA78136." evidence="10" ref="2">
    <original>R</original>
    <variation>P</variation>
    <location>
        <position position="22"/>
    </location>
</feature>
<feature type="sequence conflict" description="In Ref. 2; CAA78136." evidence="10" ref="2">
    <original>V</original>
    <variation>L</variation>
    <location>
        <position position="205"/>
    </location>
</feature>
<feature type="sequence conflict" description="In Ref. 1; AAA41696." evidence="10" ref="1">
    <location>
        <position position="501"/>
    </location>
</feature>
<organism>
    <name type="scientific">Rattus norvegicus</name>
    <name type="common">Rat</name>
    <dbReference type="NCBI Taxonomy" id="10116"/>
    <lineage>
        <taxon>Eukaryota</taxon>
        <taxon>Metazoa</taxon>
        <taxon>Chordata</taxon>
        <taxon>Craniata</taxon>
        <taxon>Vertebrata</taxon>
        <taxon>Euteleostomi</taxon>
        <taxon>Mammalia</taxon>
        <taxon>Eutheria</taxon>
        <taxon>Euarchontoglires</taxon>
        <taxon>Glires</taxon>
        <taxon>Rodentia</taxon>
        <taxon>Myomorpha</taxon>
        <taxon>Muroidea</taxon>
        <taxon>Muridae</taxon>
        <taxon>Murinae</taxon>
        <taxon>Rattus</taxon>
    </lineage>
</organism>
<protein>
    <recommendedName>
        <fullName>Neurofilament medium polypeptide</fullName>
        <shortName>NF-M</shortName>
    </recommendedName>
    <alternativeName>
        <fullName>160 kDa neurofilament protein</fullName>
    </alternativeName>
    <alternativeName>
        <fullName>Neurofilament 3</fullName>
    </alternativeName>
    <alternativeName>
        <fullName>Neurofilament triplet M protein</fullName>
    </alternativeName>
</protein>
<accession>P12839</accession>
<accession>Q63370</accession>
<gene>
    <name type="primary">Nefm</name>
    <name type="synonym">Nef3</name>
    <name type="synonym">Nfm</name>
</gene>
<dbReference type="EMBL" id="M18628">
    <property type="protein sequence ID" value="AAA41696.1"/>
    <property type="molecule type" value="mRNA"/>
</dbReference>
<dbReference type="EMBL" id="Z12152">
    <property type="protein sequence ID" value="CAA78136.1"/>
    <property type="molecule type" value="mRNA"/>
</dbReference>
<dbReference type="PIR" id="A45669">
    <property type="entry name" value="A45669"/>
</dbReference>
<dbReference type="RefSeq" id="NP_058725.1">
    <property type="nucleotide sequence ID" value="NM_017029.2"/>
</dbReference>
<dbReference type="SMR" id="P12839"/>
<dbReference type="BioGRID" id="246731">
    <property type="interactions" value="6"/>
</dbReference>
<dbReference type="DIP" id="DIP-208N"/>
<dbReference type="FunCoup" id="P12839">
    <property type="interactions" value="92"/>
</dbReference>
<dbReference type="IntAct" id="P12839">
    <property type="interactions" value="2"/>
</dbReference>
<dbReference type="MINT" id="P12839"/>
<dbReference type="STRING" id="10116.ENSRNOP00000018637"/>
<dbReference type="GlyConnect" id="432">
    <property type="glycosylation" value="1 O-GlcNAc glycan (2 sites)"/>
</dbReference>
<dbReference type="GlyCosmos" id="P12839">
    <property type="glycosylation" value="2 sites, 1 glycan"/>
</dbReference>
<dbReference type="GlyGen" id="P12839">
    <property type="glycosylation" value="4 sites, 1 O-linked glycan (4 sites)"/>
</dbReference>
<dbReference type="iPTMnet" id="P12839"/>
<dbReference type="PhosphoSitePlus" id="P12839"/>
<dbReference type="jPOST" id="P12839"/>
<dbReference type="PaxDb" id="10116-ENSRNOP00000065853"/>
<dbReference type="GeneID" id="24588"/>
<dbReference type="KEGG" id="rno:24588"/>
<dbReference type="UCSC" id="RGD:3160">
    <property type="organism name" value="rat"/>
</dbReference>
<dbReference type="AGR" id="RGD:3160"/>
<dbReference type="CTD" id="4741"/>
<dbReference type="RGD" id="3160">
    <property type="gene designation" value="Nefm"/>
</dbReference>
<dbReference type="eggNOG" id="KOG1216">
    <property type="taxonomic scope" value="Eukaryota"/>
</dbReference>
<dbReference type="InParanoid" id="P12839"/>
<dbReference type="OrthoDB" id="90923at9989"/>
<dbReference type="PhylomeDB" id="P12839"/>
<dbReference type="PRO" id="PR:P12839"/>
<dbReference type="Proteomes" id="UP000002494">
    <property type="component" value="Unplaced"/>
</dbReference>
<dbReference type="GO" id="GO:0030424">
    <property type="term" value="C:axon"/>
    <property type="evidence" value="ECO:0000314"/>
    <property type="project" value="BHF-UCL"/>
</dbReference>
<dbReference type="GO" id="GO:0005856">
    <property type="term" value="C:cytoskeleton"/>
    <property type="evidence" value="ECO:0000314"/>
    <property type="project" value="UniProtKB"/>
</dbReference>
<dbReference type="GO" id="GO:0005882">
    <property type="term" value="C:intermediate filament"/>
    <property type="evidence" value="ECO:0000314"/>
    <property type="project" value="RGD"/>
</dbReference>
<dbReference type="GO" id="GO:0097418">
    <property type="term" value="C:neurofibrillary tangle"/>
    <property type="evidence" value="ECO:0000266"/>
    <property type="project" value="RGD"/>
</dbReference>
<dbReference type="GO" id="GO:0005883">
    <property type="term" value="C:neurofilament"/>
    <property type="evidence" value="ECO:0000314"/>
    <property type="project" value="RGD"/>
</dbReference>
<dbReference type="GO" id="GO:0031594">
    <property type="term" value="C:neuromuscular junction"/>
    <property type="evidence" value="ECO:0000266"/>
    <property type="project" value="RGD"/>
</dbReference>
<dbReference type="GO" id="GO:0043005">
    <property type="term" value="C:neuron projection"/>
    <property type="evidence" value="ECO:0000266"/>
    <property type="project" value="RGD"/>
</dbReference>
<dbReference type="GO" id="GO:0043204">
    <property type="term" value="C:perikaryon"/>
    <property type="evidence" value="ECO:0000314"/>
    <property type="project" value="RGD"/>
</dbReference>
<dbReference type="GO" id="GO:0014069">
    <property type="term" value="C:postsynaptic density"/>
    <property type="evidence" value="ECO:0000266"/>
    <property type="project" value="RGD"/>
</dbReference>
<dbReference type="GO" id="GO:0099160">
    <property type="term" value="C:postsynaptic intermediate filament cytoskeleton"/>
    <property type="evidence" value="ECO:0000266"/>
    <property type="project" value="RGD"/>
</dbReference>
<dbReference type="GO" id="GO:0099182">
    <property type="term" value="C:presynaptic intermediate filament cytoskeleton"/>
    <property type="evidence" value="ECO:0000266"/>
    <property type="project" value="RGD"/>
</dbReference>
<dbReference type="GO" id="GO:0044877">
    <property type="term" value="F:protein-containing complex binding"/>
    <property type="evidence" value="ECO:0000314"/>
    <property type="project" value="RGD"/>
</dbReference>
<dbReference type="GO" id="GO:0005102">
    <property type="term" value="F:signaling receptor binding"/>
    <property type="evidence" value="ECO:0000353"/>
    <property type="project" value="RGD"/>
</dbReference>
<dbReference type="GO" id="GO:0005200">
    <property type="term" value="F:structural constituent of cytoskeleton"/>
    <property type="evidence" value="ECO:0000318"/>
    <property type="project" value="GO_Central"/>
</dbReference>
<dbReference type="GO" id="GO:0015643">
    <property type="term" value="F:toxic substance binding"/>
    <property type="evidence" value="ECO:0000314"/>
    <property type="project" value="RGD"/>
</dbReference>
<dbReference type="GO" id="GO:0008088">
    <property type="term" value="P:axo-dendritic transport"/>
    <property type="evidence" value="ECO:0000266"/>
    <property type="project" value="RGD"/>
</dbReference>
<dbReference type="GO" id="GO:0031103">
    <property type="term" value="P:axon regeneration"/>
    <property type="evidence" value="ECO:0000270"/>
    <property type="project" value="RGD"/>
</dbReference>
<dbReference type="GO" id="GO:0071392">
    <property type="term" value="P:cellular response to estradiol stimulus"/>
    <property type="evidence" value="ECO:0000270"/>
    <property type="project" value="RGD"/>
</dbReference>
<dbReference type="GO" id="GO:0034599">
    <property type="term" value="P:cellular response to oxidative stress"/>
    <property type="evidence" value="ECO:0000270"/>
    <property type="project" value="RGD"/>
</dbReference>
<dbReference type="GO" id="GO:0021987">
    <property type="term" value="P:cerebral cortex development"/>
    <property type="evidence" value="ECO:0000270"/>
    <property type="project" value="RGD"/>
</dbReference>
<dbReference type="GO" id="GO:0021766">
    <property type="term" value="P:hippocampus development"/>
    <property type="evidence" value="ECO:0000270"/>
    <property type="project" value="RGD"/>
</dbReference>
<dbReference type="GO" id="GO:0045110">
    <property type="term" value="P:intermediate filament bundle assembly"/>
    <property type="evidence" value="ECO:0000266"/>
    <property type="project" value="RGD"/>
</dbReference>
<dbReference type="GO" id="GO:0045104">
    <property type="term" value="P:intermediate filament cytoskeleton organization"/>
    <property type="evidence" value="ECO:0000266"/>
    <property type="project" value="RGD"/>
</dbReference>
<dbReference type="GO" id="GO:0045105">
    <property type="term" value="P:intermediate filament polymerization or depolymerization"/>
    <property type="evidence" value="ECO:0000314"/>
    <property type="project" value="RGD"/>
</dbReference>
<dbReference type="GO" id="GO:0000226">
    <property type="term" value="P:microtubule cytoskeleton organization"/>
    <property type="evidence" value="ECO:0000266"/>
    <property type="project" value="RGD"/>
</dbReference>
<dbReference type="GO" id="GO:0033693">
    <property type="term" value="P:neurofilament bundle assembly"/>
    <property type="evidence" value="ECO:0000314"/>
    <property type="project" value="RGD"/>
</dbReference>
<dbReference type="GO" id="GO:0060052">
    <property type="term" value="P:neurofilament cytoskeleton organization"/>
    <property type="evidence" value="ECO:0000266"/>
    <property type="project" value="RGD"/>
</dbReference>
<dbReference type="GO" id="GO:0031133">
    <property type="term" value="P:regulation of axon diameter"/>
    <property type="evidence" value="ECO:0000266"/>
    <property type="project" value="RGD"/>
</dbReference>
<dbReference type="GO" id="GO:1903937">
    <property type="term" value="P:response to acrylamide"/>
    <property type="evidence" value="ECO:0000270"/>
    <property type="project" value="RGD"/>
</dbReference>
<dbReference type="GO" id="GO:0021510">
    <property type="term" value="P:spinal cord development"/>
    <property type="evidence" value="ECO:0000270"/>
    <property type="project" value="RGD"/>
</dbReference>
<dbReference type="FunFam" id="1.20.5.1160:FF:000001">
    <property type="entry name" value="Keratin type II"/>
    <property type="match status" value="1"/>
</dbReference>
<dbReference type="FunFam" id="1.20.5.170:FF:000002">
    <property type="entry name" value="Type I keratin KA11"/>
    <property type="match status" value="1"/>
</dbReference>
<dbReference type="FunFam" id="1.20.5.500:FF:000001">
    <property type="entry name" value="Type II keratin 23"/>
    <property type="match status" value="1"/>
</dbReference>
<dbReference type="Gene3D" id="1.20.5.170">
    <property type="match status" value="1"/>
</dbReference>
<dbReference type="Gene3D" id="1.20.5.500">
    <property type="entry name" value="Single helix bin"/>
    <property type="match status" value="1"/>
</dbReference>
<dbReference type="Gene3D" id="1.20.5.1160">
    <property type="entry name" value="Vasodilator-stimulated phosphoprotein"/>
    <property type="match status" value="1"/>
</dbReference>
<dbReference type="InterPro" id="IPR018039">
    <property type="entry name" value="IF_conserved"/>
</dbReference>
<dbReference type="InterPro" id="IPR039008">
    <property type="entry name" value="IF_rod_dom"/>
</dbReference>
<dbReference type="InterPro" id="IPR006821">
    <property type="entry name" value="Intermed_filament_DNA-bd"/>
</dbReference>
<dbReference type="InterPro" id="IPR050405">
    <property type="entry name" value="Intermediate_filament"/>
</dbReference>
<dbReference type="InterPro" id="IPR002957">
    <property type="entry name" value="Keratin_I"/>
</dbReference>
<dbReference type="PANTHER" id="PTHR45652">
    <property type="entry name" value="GLIAL FIBRILLARY ACIDIC PROTEIN"/>
    <property type="match status" value="1"/>
</dbReference>
<dbReference type="PANTHER" id="PTHR45652:SF3">
    <property type="entry name" value="NEUROFILAMENT MEDIUM POLYPEPTIDE"/>
    <property type="match status" value="1"/>
</dbReference>
<dbReference type="Pfam" id="PF00038">
    <property type="entry name" value="Filament"/>
    <property type="match status" value="1"/>
</dbReference>
<dbReference type="Pfam" id="PF04732">
    <property type="entry name" value="Filament_head"/>
    <property type="match status" value="1"/>
</dbReference>
<dbReference type="PRINTS" id="PR01248">
    <property type="entry name" value="TYPE1KERATIN"/>
</dbReference>
<dbReference type="SMART" id="SM01391">
    <property type="entry name" value="Filament"/>
    <property type="match status" value="1"/>
</dbReference>
<dbReference type="SUPFAM" id="SSF64593">
    <property type="entry name" value="Intermediate filament protein, coiled coil region"/>
    <property type="match status" value="2"/>
</dbReference>
<dbReference type="PROSITE" id="PS00226">
    <property type="entry name" value="IF_ROD_1"/>
    <property type="match status" value="1"/>
</dbReference>
<dbReference type="PROSITE" id="PS51842">
    <property type="entry name" value="IF_ROD_2"/>
    <property type="match status" value="1"/>
</dbReference>
<keyword id="KW-0007">Acetylation</keyword>
<keyword id="KW-0966">Cell projection</keyword>
<keyword id="KW-0175">Coiled coil</keyword>
<keyword id="KW-0963">Cytoplasm</keyword>
<keyword id="KW-0206">Cytoskeleton</keyword>
<keyword id="KW-0903">Direct protein sequencing</keyword>
<keyword id="KW-0325">Glycoprotein</keyword>
<keyword id="KW-0403">Intermediate filament</keyword>
<keyword id="KW-0488">Methylation</keyword>
<keyword id="KW-0597">Phosphoprotein</keyword>
<keyword id="KW-1185">Reference proteome</keyword>
<reference key="1">
    <citation type="journal article" date="1987" name="J. Neurosci.">
        <title>Complete amino acid sequence and in vitro expression of rat NF-M, the middle molecular weight neurofilament protein.</title>
        <authorList>
            <person name="Napolitano E.W."/>
            <person name="Chin S.S.M."/>
            <person name="Colman D.R."/>
            <person name="Liem R.K.H."/>
        </authorList>
    </citation>
    <scope>NUCLEOTIDE SEQUENCE [MRNA]</scope>
</reference>
<reference key="2">
    <citation type="journal article" date="1992" name="J. Cell Biol.">
        <title>Schwann cells of the myelin-forming phenotype express neurofilament protein NF-M.</title>
        <authorList>
            <person name="Kelly B.M."/>
            <person name="Gillespie C.S."/>
            <person name="Sherman D.L."/>
            <person name="Brophy P.J."/>
        </authorList>
    </citation>
    <scope>NUCLEOTIDE SEQUENCE [MRNA]</scope>
    <source>
        <strain>Wistar</strain>
    </source>
</reference>
<reference key="3">
    <citation type="submission" date="2007-09" db="UniProtKB">
        <authorList>
            <person name="Lubec G."/>
            <person name="Afjehi-Sadat L."/>
            <person name="Diao W."/>
            <person name="Kang S.U."/>
            <person name="Lubec S."/>
        </authorList>
    </citation>
    <scope>PROTEIN SEQUENCE OF 102-117; 139-154; 168-183; 207-216; 223-258; 352-371; 391-410; 412-427; 452-461 AND 686-693</scope>
    <scope>IDENTIFICATION BY MASS SPECTROMETRY</scope>
    <source>
        <strain>Sprague-Dawley</strain>
        <tissue>Brain</tissue>
        <tissue>Hippocampus</tissue>
        <tissue>Spinal cord</tissue>
    </source>
</reference>
<reference key="4">
    <citation type="journal article" date="1992" name="J. Biol. Chem.">
        <title>Identification of six phosphorylation sites in the COOH-terminal tail region of the rat neurofilament protein M.</title>
        <authorList>
            <person name="Xu Z.-S."/>
            <person name="Liu W.-S."/>
            <person name="Willard M.B."/>
        </authorList>
    </citation>
    <scope>PHOSPHORYLATION AT SER-503; SER-507; SER-537; SER-604; SER-609 AND SER-667</scope>
    <scope>SEQUENCE REVISION TO 500</scope>
</reference>
<reference key="5">
    <citation type="journal article" date="1993" name="J. Biol. Chem.">
        <title>Glycosylation of mammalian neurofilaments. Localization of multiple O-linked N-acetylglucosamine moieties on neurofilament polypeptides L and M.</title>
        <authorList>
            <person name="Dong D.L.-Y."/>
            <person name="Xu Z.-S."/>
            <person name="Chevrier M.R."/>
            <person name="Cotter R.J."/>
            <person name="Cleveland D.W."/>
            <person name="Hart G.W."/>
        </authorList>
    </citation>
    <scope>GLYCOSYLATION AT THR-48 AND THR-431</scope>
</reference>
<reference key="6">
    <citation type="journal article" date="1997" name="J. Biol. Chem.">
        <title>Heterodimeric associations between neuronal intermediate filament proteins.</title>
        <authorList>
            <person name="Athlan E.S."/>
            <person name="Mushynski W.E."/>
        </authorList>
    </citation>
    <scope>INTERACTION WITH NEFL AND INA</scope>
    <scope>TISSUE SPECIFICITY</scope>
</reference>
<reference key="7">
    <citation type="submission" date="2007-02" db="UniProtKB">
        <authorList>
            <person name="Lubec G."/>
            <person name="Chen W.-Q."/>
        </authorList>
    </citation>
    <scope>ACETYLATION AT SER-2</scope>
    <scope>IDENTIFICATION BY MASS SPECTROMETRY</scope>
</reference>
<reference key="8">
    <citation type="journal article" date="2012" name="Nat. Commun.">
        <title>Quantitative maps of protein phosphorylation sites across 14 different rat organs and tissues.</title>
        <authorList>
            <person name="Lundby A."/>
            <person name="Secher A."/>
            <person name="Lage K."/>
            <person name="Nordsborg N.B."/>
            <person name="Dmytriyev A."/>
            <person name="Lundby C."/>
            <person name="Olsen J.V."/>
        </authorList>
    </citation>
    <scope>PHOSPHORYLATION [LARGE SCALE ANALYSIS] AT SER-31; SER-345; SER-417; SER-429; SER-467; SER-483; SER-503; SER-507; SER-537; SER-545; SER-550; SER-551; THR-564; SER-604; SER-609; SER-643; SER-667; SER-713; SER-721; SER-751 AND SER-767</scope>
    <scope>IDENTIFICATION BY MASS SPECTROMETRY [LARGE SCALE ANALYSIS]</scope>
</reference>
<name>NFM_RAT</name>
<proteinExistence type="evidence at protein level"/>
<evidence type="ECO:0000250" key="1"/>
<evidence type="ECO:0000250" key="2">
    <source>
        <dbReference type="UniProtKB" id="O77788"/>
    </source>
</evidence>
<evidence type="ECO:0000250" key="3">
    <source>
        <dbReference type="UniProtKB" id="P08553"/>
    </source>
</evidence>
<evidence type="ECO:0000255" key="4">
    <source>
        <dbReference type="PROSITE-ProRule" id="PRU01188"/>
    </source>
</evidence>
<evidence type="ECO:0000256" key="5">
    <source>
        <dbReference type="SAM" id="MobiDB-lite"/>
    </source>
</evidence>
<evidence type="ECO:0000269" key="6">
    <source>
    </source>
</evidence>
<evidence type="ECO:0000269" key="7">
    <source>
    </source>
</evidence>
<evidence type="ECO:0000269" key="8">
    <source>
    </source>
</evidence>
<evidence type="ECO:0000269" key="9">
    <source ref="7"/>
</evidence>
<evidence type="ECO:0000305" key="10"/>
<evidence type="ECO:0007744" key="11">
    <source>
    </source>
</evidence>